<reference key="1">
    <citation type="journal article" date="1998" name="Cancer Res.">
        <title>Disruption of the mouse xeroderma pigmentosum group D DNA repair/basal transcription gene results in preimplantation lethality.</title>
        <authorList>
            <person name="de Boer J."/>
            <person name="Donker I."/>
            <person name="de Wit J."/>
            <person name="Hoeijmakers J.H.J."/>
            <person name="Weeda G."/>
        </authorList>
    </citation>
    <scope>NUCLEOTIDE SEQUENCE [MRNA]</scope>
</reference>
<reference key="2">
    <citation type="journal article" date="2005" name="Science">
        <title>The transcriptional landscape of the mammalian genome.</title>
        <authorList>
            <person name="Carninci P."/>
            <person name="Kasukawa T."/>
            <person name="Katayama S."/>
            <person name="Gough J."/>
            <person name="Frith M.C."/>
            <person name="Maeda N."/>
            <person name="Oyama R."/>
            <person name="Ravasi T."/>
            <person name="Lenhard B."/>
            <person name="Wells C."/>
            <person name="Kodzius R."/>
            <person name="Shimokawa K."/>
            <person name="Bajic V.B."/>
            <person name="Brenner S.E."/>
            <person name="Batalov S."/>
            <person name="Forrest A.R."/>
            <person name="Zavolan M."/>
            <person name="Davis M.J."/>
            <person name="Wilming L.G."/>
            <person name="Aidinis V."/>
            <person name="Allen J.E."/>
            <person name="Ambesi-Impiombato A."/>
            <person name="Apweiler R."/>
            <person name="Aturaliya R.N."/>
            <person name="Bailey T.L."/>
            <person name="Bansal M."/>
            <person name="Baxter L."/>
            <person name="Beisel K.W."/>
            <person name="Bersano T."/>
            <person name="Bono H."/>
            <person name="Chalk A.M."/>
            <person name="Chiu K.P."/>
            <person name="Choudhary V."/>
            <person name="Christoffels A."/>
            <person name="Clutterbuck D.R."/>
            <person name="Crowe M.L."/>
            <person name="Dalla E."/>
            <person name="Dalrymple B.P."/>
            <person name="de Bono B."/>
            <person name="Della Gatta G."/>
            <person name="di Bernardo D."/>
            <person name="Down T."/>
            <person name="Engstrom P."/>
            <person name="Fagiolini M."/>
            <person name="Faulkner G."/>
            <person name="Fletcher C.F."/>
            <person name="Fukushima T."/>
            <person name="Furuno M."/>
            <person name="Futaki S."/>
            <person name="Gariboldi M."/>
            <person name="Georgii-Hemming P."/>
            <person name="Gingeras T.R."/>
            <person name="Gojobori T."/>
            <person name="Green R.E."/>
            <person name="Gustincich S."/>
            <person name="Harbers M."/>
            <person name="Hayashi Y."/>
            <person name="Hensch T.K."/>
            <person name="Hirokawa N."/>
            <person name="Hill D."/>
            <person name="Huminiecki L."/>
            <person name="Iacono M."/>
            <person name="Ikeo K."/>
            <person name="Iwama A."/>
            <person name="Ishikawa T."/>
            <person name="Jakt M."/>
            <person name="Kanapin A."/>
            <person name="Katoh M."/>
            <person name="Kawasawa Y."/>
            <person name="Kelso J."/>
            <person name="Kitamura H."/>
            <person name="Kitano H."/>
            <person name="Kollias G."/>
            <person name="Krishnan S.P."/>
            <person name="Kruger A."/>
            <person name="Kummerfeld S.K."/>
            <person name="Kurochkin I.V."/>
            <person name="Lareau L.F."/>
            <person name="Lazarevic D."/>
            <person name="Lipovich L."/>
            <person name="Liu J."/>
            <person name="Liuni S."/>
            <person name="McWilliam S."/>
            <person name="Madan Babu M."/>
            <person name="Madera M."/>
            <person name="Marchionni L."/>
            <person name="Matsuda H."/>
            <person name="Matsuzawa S."/>
            <person name="Miki H."/>
            <person name="Mignone F."/>
            <person name="Miyake S."/>
            <person name="Morris K."/>
            <person name="Mottagui-Tabar S."/>
            <person name="Mulder N."/>
            <person name="Nakano N."/>
            <person name="Nakauchi H."/>
            <person name="Ng P."/>
            <person name="Nilsson R."/>
            <person name="Nishiguchi S."/>
            <person name="Nishikawa S."/>
            <person name="Nori F."/>
            <person name="Ohara O."/>
            <person name="Okazaki Y."/>
            <person name="Orlando V."/>
            <person name="Pang K.C."/>
            <person name="Pavan W.J."/>
            <person name="Pavesi G."/>
            <person name="Pesole G."/>
            <person name="Petrovsky N."/>
            <person name="Piazza S."/>
            <person name="Reed J."/>
            <person name="Reid J.F."/>
            <person name="Ring B.Z."/>
            <person name="Ringwald M."/>
            <person name="Rost B."/>
            <person name="Ruan Y."/>
            <person name="Salzberg S.L."/>
            <person name="Sandelin A."/>
            <person name="Schneider C."/>
            <person name="Schoenbach C."/>
            <person name="Sekiguchi K."/>
            <person name="Semple C.A."/>
            <person name="Seno S."/>
            <person name="Sessa L."/>
            <person name="Sheng Y."/>
            <person name="Shibata Y."/>
            <person name="Shimada H."/>
            <person name="Shimada K."/>
            <person name="Silva D."/>
            <person name="Sinclair B."/>
            <person name="Sperling S."/>
            <person name="Stupka E."/>
            <person name="Sugiura K."/>
            <person name="Sultana R."/>
            <person name="Takenaka Y."/>
            <person name="Taki K."/>
            <person name="Tammoja K."/>
            <person name="Tan S.L."/>
            <person name="Tang S."/>
            <person name="Taylor M.S."/>
            <person name="Tegner J."/>
            <person name="Teichmann S.A."/>
            <person name="Ueda H.R."/>
            <person name="van Nimwegen E."/>
            <person name="Verardo R."/>
            <person name="Wei C.L."/>
            <person name="Yagi K."/>
            <person name="Yamanishi H."/>
            <person name="Zabarovsky E."/>
            <person name="Zhu S."/>
            <person name="Zimmer A."/>
            <person name="Hide W."/>
            <person name="Bult C."/>
            <person name="Grimmond S.M."/>
            <person name="Teasdale R.D."/>
            <person name="Liu E.T."/>
            <person name="Brusic V."/>
            <person name="Quackenbush J."/>
            <person name="Wahlestedt C."/>
            <person name="Mattick J.S."/>
            <person name="Hume D.A."/>
            <person name="Kai C."/>
            <person name="Sasaki D."/>
            <person name="Tomaru Y."/>
            <person name="Fukuda S."/>
            <person name="Kanamori-Katayama M."/>
            <person name="Suzuki M."/>
            <person name="Aoki J."/>
            <person name="Arakawa T."/>
            <person name="Iida J."/>
            <person name="Imamura K."/>
            <person name="Itoh M."/>
            <person name="Kato T."/>
            <person name="Kawaji H."/>
            <person name="Kawagashira N."/>
            <person name="Kawashima T."/>
            <person name="Kojima M."/>
            <person name="Kondo S."/>
            <person name="Konno H."/>
            <person name="Nakano K."/>
            <person name="Ninomiya N."/>
            <person name="Nishio T."/>
            <person name="Okada M."/>
            <person name="Plessy C."/>
            <person name="Shibata K."/>
            <person name="Shiraki T."/>
            <person name="Suzuki S."/>
            <person name="Tagami M."/>
            <person name="Waki K."/>
            <person name="Watahiki A."/>
            <person name="Okamura-Oho Y."/>
            <person name="Suzuki H."/>
            <person name="Kawai J."/>
            <person name="Hayashizaki Y."/>
        </authorList>
    </citation>
    <scope>NUCLEOTIDE SEQUENCE [LARGE SCALE MRNA]</scope>
    <source>
        <strain>C57BL/6J</strain>
        <tissue>Lung</tissue>
    </source>
</reference>
<reference key="3">
    <citation type="submission" date="2005-07" db="EMBL/GenBank/DDBJ databases">
        <authorList>
            <person name="Mural R.J."/>
            <person name="Adams M.D."/>
            <person name="Myers E.W."/>
            <person name="Smith H.O."/>
            <person name="Venter J.C."/>
        </authorList>
    </citation>
    <scope>NUCLEOTIDE SEQUENCE [LARGE SCALE GENOMIC DNA]</scope>
</reference>
<reference key="4">
    <citation type="journal article" date="2010" name="Cell">
        <title>A tissue-specific atlas of mouse protein phosphorylation and expression.</title>
        <authorList>
            <person name="Huttlin E.L."/>
            <person name="Jedrychowski M.P."/>
            <person name="Elias J.E."/>
            <person name="Goswami T."/>
            <person name="Rad R."/>
            <person name="Beausoleil S.A."/>
            <person name="Villen J."/>
            <person name="Haas W."/>
            <person name="Sowa M.E."/>
            <person name="Gygi S.P."/>
        </authorList>
    </citation>
    <scope>IDENTIFICATION BY MASS SPECTROMETRY [LARGE SCALE ANALYSIS]</scope>
    <source>
        <tissue>Testis</tissue>
    </source>
</reference>
<dbReference type="EC" id="5.6.2.3" evidence="2"/>
<dbReference type="EMBL" id="U97572">
    <property type="protein sequence ID" value="AAB58296.1"/>
    <property type="molecule type" value="mRNA"/>
</dbReference>
<dbReference type="EMBL" id="AK004652">
    <property type="protein sequence ID" value="BAB23443.1"/>
    <property type="status" value="ALT_INIT"/>
    <property type="molecule type" value="mRNA"/>
</dbReference>
<dbReference type="EMBL" id="AK082761">
    <property type="protein sequence ID" value="BAC38607.1"/>
    <property type="molecule type" value="mRNA"/>
</dbReference>
<dbReference type="EMBL" id="CH466639">
    <property type="protein sequence ID" value="EDL23140.1"/>
    <property type="molecule type" value="Genomic_DNA"/>
</dbReference>
<dbReference type="CCDS" id="CCDS20900.1"/>
<dbReference type="RefSeq" id="NP_031975.2">
    <property type="nucleotide sequence ID" value="NM_007949.4"/>
</dbReference>
<dbReference type="SMR" id="O08811"/>
<dbReference type="BioGRID" id="199500">
    <property type="interactions" value="1"/>
</dbReference>
<dbReference type="FunCoup" id="O08811">
    <property type="interactions" value="2840"/>
</dbReference>
<dbReference type="IntAct" id="O08811">
    <property type="interactions" value="1"/>
</dbReference>
<dbReference type="MINT" id="O08811"/>
<dbReference type="STRING" id="10090.ENSMUSP00000054380"/>
<dbReference type="iPTMnet" id="O08811"/>
<dbReference type="PhosphoSitePlus" id="O08811"/>
<dbReference type="SwissPalm" id="O08811"/>
<dbReference type="PaxDb" id="10090-ENSMUSP00000054380"/>
<dbReference type="ProteomicsDB" id="275672"/>
<dbReference type="Pumba" id="O08811"/>
<dbReference type="Antibodypedia" id="17895">
    <property type="antibodies" value="291 antibodies from 37 providers"/>
</dbReference>
<dbReference type="DNASU" id="13871"/>
<dbReference type="Ensembl" id="ENSMUST00000062831.16">
    <property type="protein sequence ID" value="ENSMUSP00000054380.10"/>
    <property type="gene ID" value="ENSMUSG00000030400.18"/>
</dbReference>
<dbReference type="GeneID" id="13871"/>
<dbReference type="KEGG" id="mmu:13871"/>
<dbReference type="UCSC" id="uc009flq.1">
    <property type="organism name" value="mouse"/>
</dbReference>
<dbReference type="AGR" id="MGI:95413"/>
<dbReference type="CTD" id="2068"/>
<dbReference type="MGI" id="MGI:95413">
    <property type="gene designation" value="Ercc2"/>
</dbReference>
<dbReference type="VEuPathDB" id="HostDB:ENSMUSG00000030400"/>
<dbReference type="eggNOG" id="KOG1131">
    <property type="taxonomic scope" value="Eukaryota"/>
</dbReference>
<dbReference type="GeneTree" id="ENSGT00950000182970"/>
<dbReference type="InParanoid" id="O08811"/>
<dbReference type="OMA" id="WQTMGIL"/>
<dbReference type="OrthoDB" id="272481at2759"/>
<dbReference type="PhylomeDB" id="O08811"/>
<dbReference type="TreeFam" id="TF101232"/>
<dbReference type="Reactome" id="R-MMU-112382">
    <property type="pathway name" value="Formation of RNA Pol II elongation complex"/>
</dbReference>
<dbReference type="Reactome" id="R-MMU-113418">
    <property type="pathway name" value="Formation of the Early Elongation Complex"/>
</dbReference>
<dbReference type="Reactome" id="R-MMU-5696395">
    <property type="pathway name" value="Formation of Incision Complex in GG-NER"/>
</dbReference>
<dbReference type="Reactome" id="R-MMU-5696400">
    <property type="pathway name" value="Dual Incision in GG-NER"/>
</dbReference>
<dbReference type="Reactome" id="R-MMU-674695">
    <property type="pathway name" value="RNA Polymerase II Pre-transcription Events"/>
</dbReference>
<dbReference type="Reactome" id="R-MMU-6781823">
    <property type="pathway name" value="Formation of TC-NER Pre-Incision Complex"/>
</dbReference>
<dbReference type="Reactome" id="R-MMU-6782135">
    <property type="pathway name" value="Dual incision in TC-NER"/>
</dbReference>
<dbReference type="Reactome" id="R-MMU-6782210">
    <property type="pathway name" value="Gap-filling DNA repair synthesis and ligation in TC-NER"/>
</dbReference>
<dbReference type="Reactome" id="R-MMU-6796648">
    <property type="pathway name" value="TP53 Regulates Transcription of DNA Repair Genes"/>
</dbReference>
<dbReference type="Reactome" id="R-MMU-72086">
    <property type="pathway name" value="mRNA Capping"/>
</dbReference>
<dbReference type="Reactome" id="R-MMU-73762">
    <property type="pathway name" value="RNA Polymerase I Transcription Initiation"/>
</dbReference>
<dbReference type="Reactome" id="R-MMU-73772">
    <property type="pathway name" value="RNA Polymerase I Promoter Escape"/>
</dbReference>
<dbReference type="Reactome" id="R-MMU-73776">
    <property type="pathway name" value="RNA Polymerase II Promoter Escape"/>
</dbReference>
<dbReference type="Reactome" id="R-MMU-73779">
    <property type="pathway name" value="RNA Polymerase II Transcription Pre-Initiation And Promoter Opening"/>
</dbReference>
<dbReference type="Reactome" id="R-MMU-73863">
    <property type="pathway name" value="RNA Polymerase I Transcription Termination"/>
</dbReference>
<dbReference type="Reactome" id="R-MMU-75953">
    <property type="pathway name" value="RNA Polymerase II Transcription Initiation"/>
</dbReference>
<dbReference type="Reactome" id="R-MMU-75955">
    <property type="pathway name" value="RNA Polymerase II Transcription Elongation"/>
</dbReference>
<dbReference type="Reactome" id="R-MMU-76042">
    <property type="pathway name" value="RNA Polymerase II Transcription Initiation And Promoter Clearance"/>
</dbReference>
<dbReference type="Reactome" id="R-MMU-77075">
    <property type="pathway name" value="RNA Pol II CTD phosphorylation and interaction with CE"/>
</dbReference>
<dbReference type="BioGRID-ORCS" id="13871">
    <property type="hits" value="32 hits in 120 CRISPR screens"/>
</dbReference>
<dbReference type="PRO" id="PR:O08811"/>
<dbReference type="Proteomes" id="UP000000589">
    <property type="component" value="Chromosome 7"/>
</dbReference>
<dbReference type="RNAct" id="O08811">
    <property type="molecule type" value="protein"/>
</dbReference>
<dbReference type="Bgee" id="ENSMUSG00000030400">
    <property type="expression patterns" value="Expressed in spermatocyte and 152 other cell types or tissues"/>
</dbReference>
<dbReference type="ExpressionAtlas" id="O08811">
    <property type="expression patterns" value="baseline and differential"/>
</dbReference>
<dbReference type="GO" id="GO:0070516">
    <property type="term" value="C:CAK-ERCC2 complex"/>
    <property type="evidence" value="ECO:0007669"/>
    <property type="project" value="Ensembl"/>
</dbReference>
<dbReference type="GO" id="GO:0005737">
    <property type="term" value="C:cytoplasm"/>
    <property type="evidence" value="ECO:0000250"/>
    <property type="project" value="UniProtKB"/>
</dbReference>
<dbReference type="GO" id="GO:0005829">
    <property type="term" value="C:cytosol"/>
    <property type="evidence" value="ECO:0007669"/>
    <property type="project" value="Ensembl"/>
</dbReference>
<dbReference type="GO" id="GO:0071817">
    <property type="term" value="C:MMXD complex"/>
    <property type="evidence" value="ECO:0000250"/>
    <property type="project" value="UniProtKB"/>
</dbReference>
<dbReference type="GO" id="GO:0005634">
    <property type="term" value="C:nucleus"/>
    <property type="evidence" value="ECO:0000314"/>
    <property type="project" value="MGI"/>
</dbReference>
<dbReference type="GO" id="GO:0005819">
    <property type="term" value="C:spindle"/>
    <property type="evidence" value="ECO:0000250"/>
    <property type="project" value="UniProtKB"/>
</dbReference>
<dbReference type="GO" id="GO:0005669">
    <property type="term" value="C:transcription factor TFIID complex"/>
    <property type="evidence" value="ECO:0007669"/>
    <property type="project" value="Ensembl"/>
</dbReference>
<dbReference type="GO" id="GO:0000439">
    <property type="term" value="C:transcription factor TFIIH core complex"/>
    <property type="evidence" value="ECO:0007669"/>
    <property type="project" value="Ensembl"/>
</dbReference>
<dbReference type="GO" id="GO:0005675">
    <property type="term" value="C:transcription factor TFIIH holo complex"/>
    <property type="evidence" value="ECO:0000250"/>
    <property type="project" value="UniProtKB"/>
</dbReference>
<dbReference type="GO" id="GO:0051539">
    <property type="term" value="F:4 iron, 4 sulfur cluster binding"/>
    <property type="evidence" value="ECO:0007669"/>
    <property type="project" value="UniProtKB-KW"/>
</dbReference>
<dbReference type="GO" id="GO:0043139">
    <property type="term" value="F:5'-3' DNA helicase activity"/>
    <property type="evidence" value="ECO:0000250"/>
    <property type="project" value="UniProtKB"/>
</dbReference>
<dbReference type="GO" id="GO:0005524">
    <property type="term" value="F:ATP binding"/>
    <property type="evidence" value="ECO:0007669"/>
    <property type="project" value="UniProtKB-KW"/>
</dbReference>
<dbReference type="GO" id="GO:0016887">
    <property type="term" value="F:ATP hydrolysis activity"/>
    <property type="evidence" value="ECO:0007669"/>
    <property type="project" value="RHEA"/>
</dbReference>
<dbReference type="GO" id="GO:0003677">
    <property type="term" value="F:DNA binding"/>
    <property type="evidence" value="ECO:0007669"/>
    <property type="project" value="UniProtKB-KW"/>
</dbReference>
<dbReference type="GO" id="GO:0046872">
    <property type="term" value="F:metal ion binding"/>
    <property type="evidence" value="ECO:0007669"/>
    <property type="project" value="UniProtKB-KW"/>
</dbReference>
<dbReference type="GO" id="GO:0030674">
    <property type="term" value="F:protein-macromolecule adaptor activity"/>
    <property type="evidence" value="ECO:0007669"/>
    <property type="project" value="Ensembl"/>
</dbReference>
<dbReference type="GO" id="GO:0006915">
    <property type="term" value="P:apoptotic process"/>
    <property type="evidence" value="ECO:0000250"/>
    <property type="project" value="UniProtKB"/>
</dbReference>
<dbReference type="GO" id="GO:0030282">
    <property type="term" value="P:bone mineralization"/>
    <property type="evidence" value="ECO:0000315"/>
    <property type="project" value="MGI"/>
</dbReference>
<dbReference type="GO" id="GO:0032289">
    <property type="term" value="P:central nervous system myelin formation"/>
    <property type="evidence" value="ECO:0000315"/>
    <property type="project" value="MGI"/>
</dbReference>
<dbReference type="GO" id="GO:0007059">
    <property type="term" value="P:chromosome segregation"/>
    <property type="evidence" value="ECO:0000250"/>
    <property type="project" value="UniProtKB"/>
</dbReference>
<dbReference type="GO" id="GO:0008340">
    <property type="term" value="P:determination of adult lifespan"/>
    <property type="evidence" value="ECO:0000315"/>
    <property type="project" value="MGI"/>
</dbReference>
<dbReference type="GO" id="GO:0006281">
    <property type="term" value="P:DNA repair"/>
    <property type="evidence" value="ECO:0000315"/>
    <property type="project" value="MGI"/>
</dbReference>
<dbReference type="GO" id="GO:0040016">
    <property type="term" value="P:embryonic cleavage"/>
    <property type="evidence" value="ECO:0000315"/>
    <property type="project" value="MGI"/>
</dbReference>
<dbReference type="GO" id="GO:0048568">
    <property type="term" value="P:embryonic organ development"/>
    <property type="evidence" value="ECO:0007669"/>
    <property type="project" value="Ensembl"/>
</dbReference>
<dbReference type="GO" id="GO:0043249">
    <property type="term" value="P:erythrocyte maturation"/>
    <property type="evidence" value="ECO:0000315"/>
    <property type="project" value="MGI"/>
</dbReference>
<dbReference type="GO" id="GO:0030198">
    <property type="term" value="P:extracellular matrix organization"/>
    <property type="evidence" value="ECO:0000315"/>
    <property type="project" value="MGI"/>
</dbReference>
<dbReference type="GO" id="GO:0035315">
    <property type="term" value="P:hair cell differentiation"/>
    <property type="evidence" value="ECO:0000315"/>
    <property type="project" value="MGI"/>
</dbReference>
<dbReference type="GO" id="GO:0022405">
    <property type="term" value="P:hair cycle process"/>
    <property type="evidence" value="ECO:0000315"/>
    <property type="project" value="MGI"/>
</dbReference>
<dbReference type="GO" id="GO:0048820">
    <property type="term" value="P:hair follicle maturation"/>
    <property type="evidence" value="ECO:0000315"/>
    <property type="project" value="MGI"/>
</dbReference>
<dbReference type="GO" id="GO:0060218">
    <property type="term" value="P:hematopoietic stem cell differentiation"/>
    <property type="evidence" value="ECO:0000315"/>
    <property type="project" value="MGI"/>
</dbReference>
<dbReference type="GO" id="GO:0071425">
    <property type="term" value="P:hematopoietic stem cell proliferation"/>
    <property type="evidence" value="ECO:0000315"/>
    <property type="project" value="MGI"/>
</dbReference>
<dbReference type="GO" id="GO:0001701">
    <property type="term" value="P:in utero embryonic development"/>
    <property type="evidence" value="ECO:0000315"/>
    <property type="project" value="MGI"/>
</dbReference>
<dbReference type="GO" id="GO:0048009">
    <property type="term" value="P:insulin-like growth factor receptor signaling pathway"/>
    <property type="evidence" value="ECO:0000315"/>
    <property type="project" value="MGI"/>
</dbReference>
<dbReference type="GO" id="GO:0072332">
    <property type="term" value="P:intrinsic apoptotic signaling pathway by p53 class mediator"/>
    <property type="evidence" value="ECO:0000315"/>
    <property type="project" value="MGI"/>
</dbReference>
<dbReference type="GO" id="GO:0000462">
    <property type="term" value="P:maturation of SSU-rRNA from tricistronic rRNA transcript (SSU-rRNA, 5.8S rRNA, LSU-rRNA)"/>
    <property type="evidence" value="ECO:0000315"/>
    <property type="project" value="MGI"/>
</dbReference>
<dbReference type="GO" id="GO:0035264">
    <property type="term" value="P:multicellular organism growth"/>
    <property type="evidence" value="ECO:0000315"/>
    <property type="project" value="MGI"/>
</dbReference>
<dbReference type="GO" id="GO:0006289">
    <property type="term" value="P:nucleotide-excision repair"/>
    <property type="evidence" value="ECO:0000315"/>
    <property type="project" value="MGI"/>
</dbReference>
<dbReference type="GO" id="GO:0009791">
    <property type="term" value="P:post-embryonic development"/>
    <property type="evidence" value="ECO:0000315"/>
    <property type="project" value="MGI"/>
</dbReference>
<dbReference type="GO" id="GO:1901990">
    <property type="term" value="P:regulation of mitotic cell cycle phase transition"/>
    <property type="evidence" value="ECO:0007669"/>
    <property type="project" value="Ensembl"/>
</dbReference>
<dbReference type="GO" id="GO:0006357">
    <property type="term" value="P:regulation of transcription by RNA polymerase II"/>
    <property type="evidence" value="ECO:0007669"/>
    <property type="project" value="Ensembl"/>
</dbReference>
<dbReference type="GO" id="GO:0001666">
    <property type="term" value="P:response to hypoxia"/>
    <property type="evidence" value="ECO:0007669"/>
    <property type="project" value="Ensembl"/>
</dbReference>
<dbReference type="GO" id="GO:0006979">
    <property type="term" value="P:response to oxidative stress"/>
    <property type="evidence" value="ECO:0000315"/>
    <property type="project" value="MGI"/>
</dbReference>
<dbReference type="GO" id="GO:0009411">
    <property type="term" value="P:response to UV"/>
    <property type="evidence" value="ECO:0000315"/>
    <property type="project" value="MGI"/>
</dbReference>
<dbReference type="GO" id="GO:0042274">
    <property type="term" value="P:ribosomal small subunit biogenesis"/>
    <property type="evidence" value="ECO:0000315"/>
    <property type="project" value="MGI"/>
</dbReference>
<dbReference type="GO" id="GO:0043588">
    <property type="term" value="P:skin development"/>
    <property type="evidence" value="ECO:0000315"/>
    <property type="project" value="MGI"/>
</dbReference>
<dbReference type="GO" id="GO:0021510">
    <property type="term" value="P:spinal cord development"/>
    <property type="evidence" value="ECO:0000315"/>
    <property type="project" value="MGI"/>
</dbReference>
<dbReference type="GO" id="GO:0006366">
    <property type="term" value="P:transcription by RNA polymerase II"/>
    <property type="evidence" value="ECO:0000250"/>
    <property type="project" value="UniProtKB"/>
</dbReference>
<dbReference type="GO" id="GO:0006362">
    <property type="term" value="P:transcription elongation by RNA polymerase I"/>
    <property type="evidence" value="ECO:0000315"/>
    <property type="project" value="MGI"/>
</dbReference>
<dbReference type="GO" id="GO:0006367">
    <property type="term" value="P:transcription initiation at RNA polymerase II promoter"/>
    <property type="evidence" value="ECO:0007669"/>
    <property type="project" value="Ensembl"/>
</dbReference>
<dbReference type="GO" id="GO:0006283">
    <property type="term" value="P:transcription-coupled nucleotide-excision repair"/>
    <property type="evidence" value="ECO:0000250"/>
    <property type="project" value="UniProtKB"/>
</dbReference>
<dbReference type="GO" id="GO:0009650">
    <property type="term" value="P:UV protection"/>
    <property type="evidence" value="ECO:0000315"/>
    <property type="project" value="MGI"/>
</dbReference>
<dbReference type="CDD" id="cd17969">
    <property type="entry name" value="DEAHc_XPD"/>
    <property type="match status" value="1"/>
</dbReference>
<dbReference type="CDD" id="cd18788">
    <property type="entry name" value="SF2_C_XPD"/>
    <property type="match status" value="1"/>
</dbReference>
<dbReference type="FunFam" id="1.10.275.40:FF:000001">
    <property type="entry name" value="DNA repair helicase (Rad3)"/>
    <property type="match status" value="1"/>
</dbReference>
<dbReference type="FunFam" id="3.40.50.300:FF:000135">
    <property type="entry name" value="DNA repair helicase RAD3, putative"/>
    <property type="match status" value="1"/>
</dbReference>
<dbReference type="FunFam" id="3.40.50.300:FF:000128">
    <property type="entry name" value="Putative DNA repair helicase RAD3"/>
    <property type="match status" value="1"/>
</dbReference>
<dbReference type="FunFam" id="3.40.50.300:FF:000381">
    <property type="entry name" value="TFIIH basal transcription factor complex helicase subunit"/>
    <property type="match status" value="1"/>
</dbReference>
<dbReference type="Gene3D" id="3.40.50.300">
    <property type="entry name" value="P-loop containing nucleotide triphosphate hydrolases"/>
    <property type="match status" value="2"/>
</dbReference>
<dbReference type="InterPro" id="IPR006555">
    <property type="entry name" value="ATP-dep_Helicase_C"/>
</dbReference>
<dbReference type="InterPro" id="IPR045028">
    <property type="entry name" value="DinG/Rad3-like"/>
</dbReference>
<dbReference type="InterPro" id="IPR002464">
    <property type="entry name" value="DNA/RNA_helicase_DEAH_CS"/>
</dbReference>
<dbReference type="InterPro" id="IPR010643">
    <property type="entry name" value="HBB"/>
</dbReference>
<dbReference type="InterPro" id="IPR014013">
    <property type="entry name" value="Helic_SF1/SF2_ATP-bd_DinG/Rad3"/>
</dbReference>
<dbReference type="InterPro" id="IPR006554">
    <property type="entry name" value="Helicase-like_DEXD_c2"/>
</dbReference>
<dbReference type="InterPro" id="IPR027417">
    <property type="entry name" value="P-loop_NTPase"/>
</dbReference>
<dbReference type="InterPro" id="IPR010614">
    <property type="entry name" value="RAD3-like_helicase_DEAD"/>
</dbReference>
<dbReference type="InterPro" id="IPR013020">
    <property type="entry name" value="Rad3/Chl1-like"/>
</dbReference>
<dbReference type="InterPro" id="IPR001945">
    <property type="entry name" value="RAD3/XPD"/>
</dbReference>
<dbReference type="NCBIfam" id="TIGR00604">
    <property type="entry name" value="rad3"/>
    <property type="match status" value="1"/>
</dbReference>
<dbReference type="PANTHER" id="PTHR11472">
    <property type="entry name" value="DNA REPAIR DEAD HELICASE RAD3/XP-D SUBFAMILY MEMBER"/>
    <property type="match status" value="1"/>
</dbReference>
<dbReference type="PANTHER" id="PTHR11472:SF1">
    <property type="entry name" value="GENERAL TRANSCRIPTION AND DNA REPAIR FACTOR IIH HELICASE SUBUNIT XPD"/>
    <property type="match status" value="1"/>
</dbReference>
<dbReference type="Pfam" id="PF06733">
    <property type="entry name" value="DEAD_2"/>
    <property type="match status" value="1"/>
</dbReference>
<dbReference type="Pfam" id="PF06777">
    <property type="entry name" value="HBB"/>
    <property type="match status" value="1"/>
</dbReference>
<dbReference type="Pfam" id="PF13307">
    <property type="entry name" value="Helicase_C_2"/>
    <property type="match status" value="1"/>
</dbReference>
<dbReference type="PRINTS" id="PR00852">
    <property type="entry name" value="XRODRMPGMNTD"/>
</dbReference>
<dbReference type="SMART" id="SM00488">
    <property type="entry name" value="DEXDc2"/>
    <property type="match status" value="1"/>
</dbReference>
<dbReference type="SMART" id="SM00491">
    <property type="entry name" value="HELICc2"/>
    <property type="match status" value="1"/>
</dbReference>
<dbReference type="SUPFAM" id="SSF52540">
    <property type="entry name" value="P-loop containing nucleoside triphosphate hydrolases"/>
    <property type="match status" value="1"/>
</dbReference>
<dbReference type="PROSITE" id="PS00690">
    <property type="entry name" value="DEAH_ATP_HELICASE"/>
    <property type="match status" value="1"/>
</dbReference>
<dbReference type="PROSITE" id="PS51193">
    <property type="entry name" value="HELICASE_ATP_BIND_2"/>
    <property type="match status" value="1"/>
</dbReference>
<keyword id="KW-0004">4Fe-4S</keyword>
<keyword id="KW-0067">ATP-binding</keyword>
<keyword id="KW-0159">Chromosome partition</keyword>
<keyword id="KW-0963">Cytoplasm</keyword>
<keyword id="KW-0206">Cytoskeleton</keyword>
<keyword id="KW-0227">DNA damage</keyword>
<keyword id="KW-0234">DNA repair</keyword>
<keyword id="KW-0238">DNA-binding</keyword>
<keyword id="KW-0347">Helicase</keyword>
<keyword id="KW-0378">Hydrolase</keyword>
<keyword id="KW-0408">Iron</keyword>
<keyword id="KW-0411">Iron-sulfur</keyword>
<keyword id="KW-0413">Isomerase</keyword>
<keyword id="KW-0460">Magnesium</keyword>
<keyword id="KW-0479">Metal-binding</keyword>
<keyword id="KW-0547">Nucleotide-binding</keyword>
<keyword id="KW-0539">Nucleus</keyword>
<keyword id="KW-1185">Reference proteome</keyword>
<keyword id="KW-0804">Transcription</keyword>
<keyword id="KW-0805">Transcription regulation</keyword>
<keyword id="KW-0832">Ubl conjugation</keyword>
<feature type="chain" id="PRO_0000101981" description="General transcription and DNA repair factor IIH helicase subunit XPD">
    <location>
        <begin position="1"/>
        <end position="760"/>
    </location>
</feature>
<feature type="domain" description="Helicase ATP-binding" evidence="3">
    <location>
        <begin position="7"/>
        <end position="283"/>
    </location>
</feature>
<feature type="region of interest" description="Mediates interaction with MMS19" evidence="1">
    <location>
        <begin position="438"/>
        <end position="637"/>
    </location>
</feature>
<feature type="short sequence motif" description="DEAH box">
    <location>
        <begin position="234"/>
        <end position="237"/>
    </location>
</feature>
<feature type="binding site" evidence="3">
    <location>
        <begin position="42"/>
        <end position="49"/>
    </location>
    <ligand>
        <name>ATP</name>
        <dbReference type="ChEBI" id="CHEBI:30616"/>
    </ligand>
</feature>
<feature type="binding site" evidence="2">
    <location>
        <position position="116"/>
    </location>
    <ligand>
        <name>[4Fe-4S] cluster</name>
        <dbReference type="ChEBI" id="CHEBI:49883"/>
    </ligand>
</feature>
<feature type="binding site" evidence="2">
    <location>
        <position position="134"/>
    </location>
    <ligand>
        <name>[4Fe-4S] cluster</name>
        <dbReference type="ChEBI" id="CHEBI:49883"/>
    </ligand>
</feature>
<feature type="binding site" evidence="2">
    <location>
        <position position="155"/>
    </location>
    <ligand>
        <name>[4Fe-4S] cluster</name>
        <dbReference type="ChEBI" id="CHEBI:49883"/>
    </ligand>
</feature>
<feature type="binding site" evidence="2">
    <location>
        <position position="190"/>
    </location>
    <ligand>
        <name>[4Fe-4S] cluster</name>
        <dbReference type="ChEBI" id="CHEBI:49883"/>
    </ligand>
</feature>
<feature type="sequence conflict" description="In Ref. 2; BAB23443." evidence="5" ref="2">
    <original>Y</original>
    <variation>C</variation>
    <location>
        <position position="285"/>
    </location>
</feature>
<feature type="sequence conflict" description="In Ref. 1; AAB58296." evidence="5" ref="1">
    <original>I</original>
    <variation>V</variation>
    <location>
        <position position="595"/>
    </location>
</feature>
<name>ERCC2_MOUSE</name>
<organism>
    <name type="scientific">Mus musculus</name>
    <name type="common">Mouse</name>
    <dbReference type="NCBI Taxonomy" id="10090"/>
    <lineage>
        <taxon>Eukaryota</taxon>
        <taxon>Metazoa</taxon>
        <taxon>Chordata</taxon>
        <taxon>Craniata</taxon>
        <taxon>Vertebrata</taxon>
        <taxon>Euteleostomi</taxon>
        <taxon>Mammalia</taxon>
        <taxon>Eutheria</taxon>
        <taxon>Euarchontoglires</taxon>
        <taxon>Glires</taxon>
        <taxon>Rodentia</taxon>
        <taxon>Myomorpha</taxon>
        <taxon>Muroidea</taxon>
        <taxon>Muridae</taxon>
        <taxon>Murinae</taxon>
        <taxon>Mus</taxon>
        <taxon>Mus</taxon>
    </lineage>
</organism>
<evidence type="ECO:0000250" key="1"/>
<evidence type="ECO:0000250" key="2">
    <source>
        <dbReference type="UniProtKB" id="P18074"/>
    </source>
</evidence>
<evidence type="ECO:0000255" key="3">
    <source>
        <dbReference type="PROSITE-ProRule" id="PRU00541"/>
    </source>
</evidence>
<evidence type="ECO:0000303" key="4">
    <source>
    </source>
</evidence>
<evidence type="ECO:0000305" key="5"/>
<sequence>MKLNVDGLLVYFPYDYIYPEQFSYMLELKRTLDAKGHGVLEMPSGTGKTVSLLALIVAYQRAYPLEVTKLIYCSRTVPEIEKVIEELRKLLSFYEQQEGEKLPFLGLALSSRKNLCIHPEVTPLRFGKDVDGKCHSLTASYVRAQYQQDASLPHCRFYEEFDIHGRQMPLPAGIYNLDDLKALGQRQGWCPYFLARYSILHANVVVYSYHYLLDPKIADLVSKELARKAVVVFDEAHNIDNVCIDSMSVNLTRRTLDRCQSNLDTLQKTVLRIKETDEQRLRDEYRRLVEGLREASVARETDAHLANPVLPDEVLQEAVPGSIRTAEHFLGFLRRLLEYVKWRLRVQHVVQESPPAFLSGLAQRVCIQRKPLRFCAERLRSLLHTLEIADLADFSPLTLLANFATLVSTYAKGFTIIIEPFDDRTPTIANPVLHFSCMDASLAIKPVFERFQSVIITSGTLSPLDIYPKILDFHPVTMATFTMTLARVCLCPMIIGRGNDQVAISSKFETREDIAVIRNYGNLLLEMSAVVPDGIVAFFTSYQYMESTVASWYEQGILENIQRNKLLFIETQDGAETSVALEKYQEACENGRGAILLSVARGKVSEGIDFVHHYGRAVIMFGVPYVYTQSRILKARLEYLRDQFQIRENDFLTFDAMRHAAQCVGRAIRGKTDYGLMVFADKRFARADKRGKLPRWIQEHLTDSNLNLTVDEGVQVAKYFLRQMAQPFHREDQLGLSLLSLEQLQSEETLQRIEQIAQQL</sequence>
<accession>O08811</accession>
<accession>Q8C487</accession>
<accession>Q9DC01</accession>
<comment type="function">
    <text evidence="2">ATP-dependent 5'-3' DNA helicase, component of the general transcription and DNA repair factor IIH (TFIIH) core complex, which is involved in general and transcription-coupled nucleotide excision repair (NER) of damaged DNA and, when complexed to CDK-activating kinase (CAK), involved in transcription by RNA polymerase II. In NER, TFIIH acts by opening DNA around the lesion to allow the excision of the damaged oligonucleotide and its replacement by a new DNA fragment. The ATP-dependent helicase activity of XPD/ERCC2 is required for DNA opening. In transcription, TFIIH has an essential role in transcription initiation. When the pre-initiation complex (PIC) has been established, TFIIH is required for promoter opening and promoter escape. Phosphorylation of the C-terminal tail (CTD) of the largest subunit of RNA polymerase II by the kinase module CAK controls the initiation of transcription. XPD/ERCC2 acts by forming a bridge between CAK and the core-TFIIH complex. Involved in the regulation of vitamin-D receptor activity. As part of the mitotic spindle-associated MMXD complex it plays a role in chromosome segregation. Might have a role in aging process and could play a causative role in the generation of skin cancers.</text>
</comment>
<comment type="catalytic activity">
    <reaction evidence="2">
        <text>Couples ATP hydrolysis with the unwinding of duplex DNA at the replication fork by translocating in the 5'-3' direction. This creates two antiparallel DNA single strands (ssDNA). The leading ssDNA polymer is the template for DNA polymerase III holoenzyme which synthesizes a continuous strand.</text>
        <dbReference type="EC" id="5.6.2.3"/>
    </reaction>
</comment>
<comment type="catalytic activity">
    <reaction evidence="2">
        <text>ATP + H2O = ADP + phosphate + H(+)</text>
        <dbReference type="Rhea" id="RHEA:13065"/>
        <dbReference type="ChEBI" id="CHEBI:15377"/>
        <dbReference type="ChEBI" id="CHEBI:15378"/>
        <dbReference type="ChEBI" id="CHEBI:30616"/>
        <dbReference type="ChEBI" id="CHEBI:43474"/>
        <dbReference type="ChEBI" id="CHEBI:456216"/>
        <dbReference type="EC" id="5.6.2.3"/>
    </reaction>
</comment>
<comment type="cofactor">
    <cofactor evidence="2">
        <name>Mg(2+)</name>
        <dbReference type="ChEBI" id="CHEBI:18420"/>
    </cofactor>
</comment>
<comment type="cofactor">
    <cofactor evidence="2">
        <name>[4Fe-4S] cluster</name>
        <dbReference type="ChEBI" id="CHEBI:49883"/>
    </cofactor>
    <text evidence="2">Binds 1 [4Fe-4S] cluster.</text>
</comment>
<comment type="subunit">
    <text evidence="2">Component of the 7-subunit TFIIH core complex composed of XPB/ERCC3, XPD/ERCC2, GTF2H1, GTF2H2, GTF2H3, GTF2H4 and GTF2H5, which is active in NER. The core complex associates with the 3-subunit CDK-activating kinase (CAK) module composed of CCNH/cyclin H, CDK7 and MNAT1 to form the 10-subunit holoenzyme (holo-TFIIH) active in transcription. The interaction with GTF2H2 results in the stimulation of the 5'--&gt;3' helicase activity. Component of the MMXD complex, which includes CIAO1, ERCC2, CIAO2B, MMS19 and SLC25A5. Interacts with CIAO1 and CIAO2B; the interaction WITH CIAO2B is direct. Interacts with ATF7IP. Interacts directly with MMS19. Part of TBP-based Pol II pre-initiation complex (PIC), in which Pol II core assembles with general transcription factors and other specific initiation factors including GTF2E1, GTF2E2, GTF2F1, GTF2F2, TCEA1, ERCC2, ERCC3, GTF2H2, GTF2H3, GTF2H4, GTF2H5, GTF2A1, GTF2A2, GTF2B and TBP; this large multi-subunit PIC complex mediates DNA unwinding and targets Pol II core to the transcription start site where the first phosphodiester bond forms.</text>
</comment>
<comment type="subcellular location">
    <subcellularLocation>
        <location evidence="2">Nucleus</location>
    </subcellularLocation>
    <subcellularLocation>
        <location evidence="2">Cytoplasm</location>
        <location evidence="2">Cytoskeleton</location>
        <location evidence="2">Spindle</location>
    </subcellularLocation>
</comment>
<comment type="PTM">
    <text evidence="2">ISGylated.</text>
</comment>
<comment type="similarity">
    <text evidence="5">Belongs to the helicase family. RAD3/XPD subfamily.</text>
</comment>
<comment type="sequence caution" evidence="5">
    <conflict type="erroneous initiation">
        <sequence resource="EMBL-CDS" id="BAB23443"/>
    </conflict>
    <text>Truncated N-terminus.</text>
</comment>
<protein>
    <recommendedName>
        <fullName>General transcription and DNA repair factor IIH helicase subunit XPD</fullName>
        <shortName>TFIIH subunit XPD</shortName>
        <ecNumber evidence="2">5.6.2.3</ecNumber>
    </recommendedName>
    <alternativeName>
        <fullName>CXPD</fullName>
    </alternativeName>
    <alternativeName>
        <fullName evidence="5">DNA 5'-3' helicase XPD</fullName>
    </alternativeName>
    <alternativeName>
        <fullName>DNA excision repair protein ERCC-2</fullName>
    </alternativeName>
    <alternativeName>
        <fullName>DNA repair protein complementing XP-D cells</fullName>
    </alternativeName>
    <alternativeName>
        <fullName>Xeroderma pigmentosum group D-complementing protein</fullName>
    </alternativeName>
</protein>
<gene>
    <name type="primary">Ercc2</name>
    <name evidence="4" type="synonym">Xpd</name>
</gene>
<proteinExistence type="evidence at protein level"/>